<gene>
    <name evidence="1" type="primary">QTRT2</name>
    <name evidence="1" type="synonym">QTRTD1</name>
</gene>
<comment type="function">
    <text evidence="1">Non-catalytic subunit of the queuine tRNA-ribosyltransferase (TGT) that catalyzes the base-exchange of a guanine (G) residue with queuine (Q) at position 34 (anticodon wobble position) in tRNAs with GU(N) anticodons (tRNA-Asp, -Asn, -His and -Tyr), resulting in the hypermodified nucleoside queuosine (7-(((4,5-cis-dihydroxy-2-cyclopenten-1-yl)amino)methyl)-7-deazaguanosine).</text>
</comment>
<comment type="cofactor">
    <cofactor evidence="1">
        <name>Zn(2+)</name>
        <dbReference type="ChEBI" id="CHEBI:29105"/>
    </cofactor>
    <text evidence="1">Binds 1 zinc ion per subunit.</text>
</comment>
<comment type="subunit">
    <text evidence="1">Heterodimer of a catalytic subunit QTRT1 and an accessory subunit QTRT2.</text>
</comment>
<comment type="subcellular location">
    <subcellularLocation>
        <location evidence="1">Cytoplasm</location>
    </subcellularLocation>
    <subcellularLocation>
        <location evidence="1">Mitochondrion outer membrane</location>
        <topology evidence="1">Peripheral membrane protein</topology>
        <orientation evidence="1">Cytoplasmic side</orientation>
    </subcellularLocation>
    <text evidence="1">May associate with the mitochondrion outer membrane.</text>
</comment>
<comment type="similarity">
    <text evidence="1">Belongs to the queuine tRNA-ribosyltransferase family. QTRT2 subfamily.</text>
</comment>
<evidence type="ECO:0000255" key="1">
    <source>
        <dbReference type="HAMAP-Rule" id="MF_03043"/>
    </source>
</evidence>
<proteinExistence type="evidence at transcript level"/>
<keyword id="KW-0963">Cytoplasm</keyword>
<keyword id="KW-0472">Membrane</keyword>
<keyword id="KW-0479">Metal-binding</keyword>
<keyword id="KW-0496">Mitochondrion</keyword>
<keyword id="KW-1000">Mitochondrion outer membrane</keyword>
<keyword id="KW-1185">Reference proteome</keyword>
<keyword id="KW-0819">tRNA processing</keyword>
<keyword id="KW-0862">Zinc</keyword>
<accession>Q5R998</accession>
<sequence length="415" mass="46829">MRLSLTKVVNGCRLGKIINLGKTGDHTMDIPGCLLYTKTGSAPHLTHHTLHNIHGVPAMAQLTLSSLAEHHEVLREYKEGVGKFIGMPESLLYCSLHDPVSPCPAGYVTNKSVSVWSVAGRVEMTVSKFMAIQQALQPDWFQCLSDGEVSCKEATSIKRVRKSVDRSLLFLDNCLRLQEESEVLQKSVIIGVIEGGDVMEERLRSARETAKRPVGGFLLDGFQGNPTTLETRLRLLSSVTAELPEDKPRLISGVSRPDEVLECIERGVDLFESFFPYQVTERGCALTFSFDYQPNPEETLLQQNGTQEEIKCMDQIKKMETTGCNQEITSFEINLKEKKYQEDFNPLVRGCSCYCCKNHTRAYIHHLLVTNELLAGVLLMMHNFEHYFGFFHYIREALKSDKLAQLKELIHRQAS</sequence>
<protein>
    <recommendedName>
        <fullName evidence="1">Queuine tRNA-ribosyltransferase accessory subunit 2</fullName>
    </recommendedName>
    <alternativeName>
        <fullName evidence="1">Queuine tRNA-ribosyltransferase domain-containing protein 1</fullName>
    </alternativeName>
</protein>
<name>QTRT2_PONAB</name>
<organism>
    <name type="scientific">Pongo abelii</name>
    <name type="common">Sumatran orangutan</name>
    <name type="synonym">Pongo pygmaeus abelii</name>
    <dbReference type="NCBI Taxonomy" id="9601"/>
    <lineage>
        <taxon>Eukaryota</taxon>
        <taxon>Metazoa</taxon>
        <taxon>Chordata</taxon>
        <taxon>Craniata</taxon>
        <taxon>Vertebrata</taxon>
        <taxon>Euteleostomi</taxon>
        <taxon>Mammalia</taxon>
        <taxon>Eutheria</taxon>
        <taxon>Euarchontoglires</taxon>
        <taxon>Primates</taxon>
        <taxon>Haplorrhini</taxon>
        <taxon>Catarrhini</taxon>
        <taxon>Hominidae</taxon>
        <taxon>Pongo</taxon>
    </lineage>
</organism>
<reference key="1">
    <citation type="submission" date="2004-11" db="EMBL/GenBank/DDBJ databases">
        <authorList>
            <consortium name="The German cDNA consortium"/>
        </authorList>
    </citation>
    <scope>NUCLEOTIDE SEQUENCE [LARGE SCALE MRNA]</scope>
    <source>
        <tissue>Brain cortex</tissue>
    </source>
</reference>
<dbReference type="EMBL" id="CR859492">
    <property type="protein sequence ID" value="CAH91662.1"/>
    <property type="molecule type" value="mRNA"/>
</dbReference>
<dbReference type="RefSeq" id="NP_001129001.1">
    <property type="nucleotide sequence ID" value="NM_001135529.1"/>
</dbReference>
<dbReference type="SMR" id="Q5R998"/>
<dbReference type="FunCoup" id="Q5R998">
    <property type="interactions" value="1966"/>
</dbReference>
<dbReference type="STRING" id="9601.ENSPPYP00000015129"/>
<dbReference type="GeneID" id="100190841"/>
<dbReference type="KEGG" id="pon:100190841"/>
<dbReference type="CTD" id="79691"/>
<dbReference type="eggNOG" id="KOG3909">
    <property type="taxonomic scope" value="Eukaryota"/>
</dbReference>
<dbReference type="InParanoid" id="Q5R998"/>
<dbReference type="OrthoDB" id="27601at2759"/>
<dbReference type="Proteomes" id="UP000001595">
    <property type="component" value="Unplaced"/>
</dbReference>
<dbReference type="GO" id="GO:0005737">
    <property type="term" value="C:cytoplasm"/>
    <property type="evidence" value="ECO:0000250"/>
    <property type="project" value="UniProtKB"/>
</dbReference>
<dbReference type="GO" id="GO:0005741">
    <property type="term" value="C:mitochondrial outer membrane"/>
    <property type="evidence" value="ECO:0007669"/>
    <property type="project" value="UniProtKB-SubCell"/>
</dbReference>
<dbReference type="GO" id="GO:0005739">
    <property type="term" value="C:mitochondrion"/>
    <property type="evidence" value="ECO:0000250"/>
    <property type="project" value="UniProtKB"/>
</dbReference>
<dbReference type="GO" id="GO:0046872">
    <property type="term" value="F:metal ion binding"/>
    <property type="evidence" value="ECO:0007669"/>
    <property type="project" value="UniProtKB-KW"/>
</dbReference>
<dbReference type="GO" id="GO:0046982">
    <property type="term" value="F:protein heterodimerization activity"/>
    <property type="evidence" value="ECO:0000250"/>
    <property type="project" value="UniProtKB"/>
</dbReference>
<dbReference type="GO" id="GO:0042803">
    <property type="term" value="F:protein homodimerization activity"/>
    <property type="evidence" value="ECO:0000250"/>
    <property type="project" value="UniProtKB"/>
</dbReference>
<dbReference type="GO" id="GO:0000049">
    <property type="term" value="F:tRNA binding"/>
    <property type="evidence" value="ECO:0000250"/>
    <property type="project" value="UniProtKB"/>
</dbReference>
<dbReference type="GO" id="GO:0008479">
    <property type="term" value="F:tRNA-guanosine(34) queuine transglycosylase activity"/>
    <property type="evidence" value="ECO:0007669"/>
    <property type="project" value="UniProtKB-UniRule"/>
</dbReference>
<dbReference type="GO" id="GO:0101030">
    <property type="term" value="P:tRNA-guanine transglycosylation"/>
    <property type="evidence" value="ECO:0007669"/>
    <property type="project" value="UniProtKB-UniRule"/>
</dbReference>
<dbReference type="Gene3D" id="3.20.20.105">
    <property type="entry name" value="Queuine tRNA-ribosyltransferase-like"/>
    <property type="match status" value="1"/>
</dbReference>
<dbReference type="HAMAP" id="MF_03043">
    <property type="entry name" value="QTRT2"/>
    <property type="match status" value="1"/>
</dbReference>
<dbReference type="InterPro" id="IPR028592">
    <property type="entry name" value="QTRTD1"/>
</dbReference>
<dbReference type="InterPro" id="IPR050852">
    <property type="entry name" value="Queuine_tRNA-ribosyltrfase"/>
</dbReference>
<dbReference type="InterPro" id="IPR036511">
    <property type="entry name" value="TGT-like_sf"/>
</dbReference>
<dbReference type="InterPro" id="IPR002616">
    <property type="entry name" value="tRNA_ribo_trans-like"/>
</dbReference>
<dbReference type="NCBIfam" id="TIGR00449">
    <property type="entry name" value="tgt_general"/>
    <property type="match status" value="1"/>
</dbReference>
<dbReference type="PANTHER" id="PTHR46064">
    <property type="entry name" value="QUEUINE TRNA-RIBOSYLTRANSFERASE ACCESSORY SUBUNIT 2"/>
    <property type="match status" value="1"/>
</dbReference>
<dbReference type="PANTHER" id="PTHR46064:SF1">
    <property type="entry name" value="QUEUINE TRNA-RIBOSYLTRANSFERASE ACCESSORY SUBUNIT 2"/>
    <property type="match status" value="1"/>
</dbReference>
<dbReference type="Pfam" id="PF01702">
    <property type="entry name" value="TGT"/>
    <property type="match status" value="1"/>
</dbReference>
<dbReference type="SUPFAM" id="SSF51713">
    <property type="entry name" value="tRNA-guanine transglycosylase"/>
    <property type="match status" value="1"/>
</dbReference>
<feature type="chain" id="PRO_0000295634" description="Queuine tRNA-ribosyltransferase accessory subunit 2">
    <location>
        <begin position="1"/>
        <end position="415"/>
    </location>
</feature>
<feature type="binding site" evidence="1">
    <location>
        <position position="351"/>
    </location>
    <ligand>
        <name>Zn(2+)</name>
        <dbReference type="ChEBI" id="CHEBI:29105"/>
    </ligand>
</feature>
<feature type="binding site" evidence="1">
    <location>
        <position position="353"/>
    </location>
    <ligand>
        <name>Zn(2+)</name>
        <dbReference type="ChEBI" id="CHEBI:29105"/>
    </ligand>
</feature>
<feature type="binding site" evidence="1">
    <location>
        <position position="356"/>
    </location>
    <ligand>
        <name>Zn(2+)</name>
        <dbReference type="ChEBI" id="CHEBI:29105"/>
    </ligand>
</feature>
<feature type="binding site" evidence="1">
    <location>
        <position position="382"/>
    </location>
    <ligand>
        <name>Zn(2+)</name>
        <dbReference type="ChEBI" id="CHEBI:29105"/>
    </ligand>
</feature>